<dbReference type="EMBL" id="CP000036">
    <property type="status" value="NOT_ANNOTATED_CDS"/>
    <property type="molecule type" value="Genomic_DNA"/>
</dbReference>
<dbReference type="RefSeq" id="WP_001386572.1">
    <property type="nucleotide sequence ID" value="NC_007613.1"/>
</dbReference>
<dbReference type="GeneID" id="93777441"/>
<dbReference type="Proteomes" id="UP000007067">
    <property type="component" value="Chromosome"/>
</dbReference>
<dbReference type="GO" id="GO:0009088">
    <property type="term" value="P:threonine biosynthetic process"/>
    <property type="evidence" value="ECO:0007669"/>
    <property type="project" value="UniProtKB-UniRule"/>
</dbReference>
<dbReference type="GO" id="GO:0031556">
    <property type="term" value="P:transcriptional attenuation by ribosome"/>
    <property type="evidence" value="ECO:0007669"/>
    <property type="project" value="UniProtKB-UniRule"/>
</dbReference>
<dbReference type="HAMAP" id="MF_01907">
    <property type="entry name" value="Leader_Thr"/>
    <property type="match status" value="1"/>
</dbReference>
<dbReference type="InterPro" id="IPR011720">
    <property type="entry name" value="Thr_lead_pept"/>
</dbReference>
<dbReference type="NCBIfam" id="NF007329">
    <property type="entry name" value="PRK09816.1"/>
    <property type="match status" value="1"/>
</dbReference>
<dbReference type="NCBIfam" id="TIGR02077">
    <property type="entry name" value="thr_lead_pep"/>
    <property type="match status" value="1"/>
</dbReference>
<dbReference type="Pfam" id="PF08254">
    <property type="entry name" value="Leader_Thr"/>
    <property type="match status" value="1"/>
</dbReference>
<sequence length="21" mass="2138">MKRISTTITTTITITTGNGAG</sequence>
<reference key="1">
    <citation type="journal article" date="2005" name="Nucleic Acids Res.">
        <title>Genome dynamics and diversity of Shigella species, the etiologic agents of bacillary dysentery.</title>
        <authorList>
            <person name="Yang F."/>
            <person name="Yang J."/>
            <person name="Zhang X."/>
            <person name="Chen L."/>
            <person name="Jiang Y."/>
            <person name="Yan Y."/>
            <person name="Tang X."/>
            <person name="Wang J."/>
            <person name="Xiong Z."/>
            <person name="Dong J."/>
            <person name="Xue Y."/>
            <person name="Zhu Y."/>
            <person name="Xu X."/>
            <person name="Sun L."/>
            <person name="Chen S."/>
            <person name="Nie H."/>
            <person name="Peng J."/>
            <person name="Xu J."/>
            <person name="Wang Y."/>
            <person name="Yuan Z."/>
            <person name="Wen Y."/>
            <person name="Yao Z."/>
            <person name="Shen Y."/>
            <person name="Qiang B."/>
            <person name="Hou Y."/>
            <person name="Yu J."/>
            <person name="Jin Q."/>
        </authorList>
    </citation>
    <scope>NUCLEOTIDE SEQUENCE [LARGE SCALE GENOMIC DNA]</scope>
    <source>
        <strain>Sb227</strain>
    </source>
</reference>
<feature type="peptide" id="PRO_0000312892" description="thr operon leader peptide">
    <location>
        <begin position="1"/>
        <end position="21"/>
    </location>
</feature>
<name>LPT_SHIBS</name>
<proteinExistence type="inferred from homology"/>
<gene>
    <name evidence="1" type="primary">thrL</name>
    <name type="ordered locus">SBO_4466.1</name>
</gene>
<keyword id="KW-0028">Amino-acid biosynthesis</keyword>
<keyword id="KW-0428">Leader peptide</keyword>
<keyword id="KW-0791">Threonine biosynthesis</keyword>
<comment type="function">
    <text evidence="1">This protein is involved in control of the biosynthesis of threonine.</text>
</comment>
<comment type="similarity">
    <text evidence="1">Belongs to the thr operon leader peptide family.</text>
</comment>
<protein>
    <recommendedName>
        <fullName evidence="1">thr operon leader peptide</fullName>
    </recommendedName>
    <alternativeName>
        <fullName evidence="1">thr operon attenuator</fullName>
    </alternativeName>
</protein>
<accession>P0C5Z2</accession>
<evidence type="ECO:0000255" key="1">
    <source>
        <dbReference type="HAMAP-Rule" id="MF_01907"/>
    </source>
</evidence>
<organism>
    <name type="scientific">Shigella boydii serotype 4 (strain Sb227)</name>
    <dbReference type="NCBI Taxonomy" id="300268"/>
    <lineage>
        <taxon>Bacteria</taxon>
        <taxon>Pseudomonadati</taxon>
        <taxon>Pseudomonadota</taxon>
        <taxon>Gammaproteobacteria</taxon>
        <taxon>Enterobacterales</taxon>
        <taxon>Enterobacteriaceae</taxon>
        <taxon>Shigella</taxon>
    </lineage>
</organism>